<accession>Q888C7</accession>
<comment type="function">
    <text evidence="1">This is one of the proteins that binds to the 5S RNA in the ribosome where it forms part of the central protuberance.</text>
</comment>
<comment type="subunit">
    <text evidence="1">Part of the 50S ribosomal subunit; part of the 5S rRNA/L5/L18/L25 subcomplex. Contacts the 5S rRNA. Binds to the 5S rRNA independently of L5 and L18.</text>
</comment>
<comment type="similarity">
    <text evidence="1">Belongs to the bacterial ribosomal protein bL25 family. CTC subfamily.</text>
</comment>
<proteinExistence type="inferred from homology"/>
<sequence>MNDFTLNAELRSDLGKGASRRLRRLASLVPAVVYGGDKAPESISMLAKEVAKLLENEASYSHIIELNVGGTKQNVIIKALQRHPAKGHVLHADFVRVVAGQKLTAIVPVHFIGEEAPIKKGGEVSHVTSELEVSCLPKDLPEFIEVDVSALEIGSIVHLSDVKAPKGVEFVALAHGNDLAIANVHAPRVVKDEDEEAAEGAAE</sequence>
<evidence type="ECO:0000255" key="1">
    <source>
        <dbReference type="HAMAP-Rule" id="MF_01334"/>
    </source>
</evidence>
<evidence type="ECO:0000305" key="2"/>
<reference key="1">
    <citation type="journal article" date="2003" name="Proc. Natl. Acad. Sci. U.S.A.">
        <title>The complete genome sequence of the Arabidopsis and tomato pathogen Pseudomonas syringae pv. tomato DC3000.</title>
        <authorList>
            <person name="Buell C.R."/>
            <person name="Joardar V."/>
            <person name="Lindeberg M."/>
            <person name="Selengut J."/>
            <person name="Paulsen I.T."/>
            <person name="Gwinn M.L."/>
            <person name="Dodson R.J."/>
            <person name="DeBoy R.T."/>
            <person name="Durkin A.S."/>
            <person name="Kolonay J.F."/>
            <person name="Madupu R."/>
            <person name="Daugherty S.C."/>
            <person name="Brinkac L.M."/>
            <person name="Beanan M.J."/>
            <person name="Haft D.H."/>
            <person name="Nelson W.C."/>
            <person name="Davidsen T.M."/>
            <person name="Zafar N."/>
            <person name="Zhou L."/>
            <person name="Liu J."/>
            <person name="Yuan Q."/>
            <person name="Khouri H.M."/>
            <person name="Fedorova N.B."/>
            <person name="Tran B."/>
            <person name="Russell D."/>
            <person name="Berry K.J."/>
            <person name="Utterback T.R."/>
            <person name="Van Aken S.E."/>
            <person name="Feldblyum T.V."/>
            <person name="D'Ascenzo M."/>
            <person name="Deng W.-L."/>
            <person name="Ramos A.R."/>
            <person name="Alfano J.R."/>
            <person name="Cartinhour S."/>
            <person name="Chatterjee A.K."/>
            <person name="Delaney T.P."/>
            <person name="Lazarowitz S.G."/>
            <person name="Martin G.B."/>
            <person name="Schneider D.J."/>
            <person name="Tang X."/>
            <person name="Bender C.L."/>
            <person name="White O."/>
            <person name="Fraser C.M."/>
            <person name="Collmer A."/>
        </authorList>
    </citation>
    <scope>NUCLEOTIDE SEQUENCE [LARGE SCALE GENOMIC DNA]</scope>
    <source>
        <strain>ATCC BAA-871 / DC3000</strain>
    </source>
</reference>
<protein>
    <recommendedName>
        <fullName evidence="1">Large ribosomal subunit protein bL25</fullName>
    </recommendedName>
    <alternativeName>
        <fullName evidence="2">50S ribosomal protein L25</fullName>
    </alternativeName>
    <alternativeName>
        <fullName evidence="1">General stress protein CTC</fullName>
    </alternativeName>
</protein>
<name>RL25_PSESM</name>
<gene>
    <name evidence="1" type="primary">rplY</name>
    <name evidence="1" type="synonym">ctc</name>
    <name type="ordered locus">PSPTO_1103</name>
</gene>
<organism>
    <name type="scientific">Pseudomonas syringae pv. tomato (strain ATCC BAA-871 / DC3000)</name>
    <dbReference type="NCBI Taxonomy" id="223283"/>
    <lineage>
        <taxon>Bacteria</taxon>
        <taxon>Pseudomonadati</taxon>
        <taxon>Pseudomonadota</taxon>
        <taxon>Gammaproteobacteria</taxon>
        <taxon>Pseudomonadales</taxon>
        <taxon>Pseudomonadaceae</taxon>
        <taxon>Pseudomonas</taxon>
    </lineage>
</organism>
<feature type="chain" id="PRO_0000181582" description="Large ribosomal subunit protein bL25">
    <location>
        <begin position="1"/>
        <end position="203"/>
    </location>
</feature>
<keyword id="KW-1185">Reference proteome</keyword>
<keyword id="KW-0687">Ribonucleoprotein</keyword>
<keyword id="KW-0689">Ribosomal protein</keyword>
<keyword id="KW-0694">RNA-binding</keyword>
<keyword id="KW-0699">rRNA-binding</keyword>
<dbReference type="EMBL" id="AE016853">
    <property type="protein sequence ID" value="AAO54632.1"/>
    <property type="molecule type" value="Genomic_DNA"/>
</dbReference>
<dbReference type="RefSeq" id="NP_790937.1">
    <property type="nucleotide sequence ID" value="NC_004578.1"/>
</dbReference>
<dbReference type="RefSeq" id="WP_005768871.1">
    <property type="nucleotide sequence ID" value="NC_004578.1"/>
</dbReference>
<dbReference type="SMR" id="Q888C7"/>
<dbReference type="STRING" id="223283.PSPTO_1103"/>
<dbReference type="GeneID" id="1182738"/>
<dbReference type="KEGG" id="pst:PSPTO_1103"/>
<dbReference type="PATRIC" id="fig|223283.9.peg.1113"/>
<dbReference type="eggNOG" id="COG1825">
    <property type="taxonomic scope" value="Bacteria"/>
</dbReference>
<dbReference type="HOGENOM" id="CLU_075939_0_1_6"/>
<dbReference type="OrthoDB" id="9806411at2"/>
<dbReference type="PhylomeDB" id="Q888C7"/>
<dbReference type="Proteomes" id="UP000002515">
    <property type="component" value="Chromosome"/>
</dbReference>
<dbReference type="GO" id="GO:0022625">
    <property type="term" value="C:cytosolic large ribosomal subunit"/>
    <property type="evidence" value="ECO:0007669"/>
    <property type="project" value="TreeGrafter"/>
</dbReference>
<dbReference type="GO" id="GO:0008097">
    <property type="term" value="F:5S rRNA binding"/>
    <property type="evidence" value="ECO:0007669"/>
    <property type="project" value="InterPro"/>
</dbReference>
<dbReference type="GO" id="GO:0003735">
    <property type="term" value="F:structural constituent of ribosome"/>
    <property type="evidence" value="ECO:0007669"/>
    <property type="project" value="InterPro"/>
</dbReference>
<dbReference type="GO" id="GO:0006412">
    <property type="term" value="P:translation"/>
    <property type="evidence" value="ECO:0007669"/>
    <property type="project" value="UniProtKB-UniRule"/>
</dbReference>
<dbReference type="CDD" id="cd00495">
    <property type="entry name" value="Ribosomal_L25_TL5_CTC"/>
    <property type="match status" value="1"/>
</dbReference>
<dbReference type="Gene3D" id="2.170.120.20">
    <property type="entry name" value="Ribosomal protein L25, beta domain"/>
    <property type="match status" value="1"/>
</dbReference>
<dbReference type="Gene3D" id="2.40.240.10">
    <property type="entry name" value="Ribosomal Protein L25, Chain P"/>
    <property type="match status" value="1"/>
</dbReference>
<dbReference type="HAMAP" id="MF_01334">
    <property type="entry name" value="Ribosomal_bL25_CTC"/>
    <property type="match status" value="1"/>
</dbReference>
<dbReference type="InterPro" id="IPR020056">
    <property type="entry name" value="Rbsml_bL25/Gln-tRNA_synth_N"/>
</dbReference>
<dbReference type="InterPro" id="IPR011035">
    <property type="entry name" value="Ribosomal_bL25/Gln-tRNA_synth"/>
</dbReference>
<dbReference type="InterPro" id="IPR020057">
    <property type="entry name" value="Ribosomal_bL25_b-dom"/>
</dbReference>
<dbReference type="InterPro" id="IPR037121">
    <property type="entry name" value="Ribosomal_bL25_C"/>
</dbReference>
<dbReference type="InterPro" id="IPR001021">
    <property type="entry name" value="Ribosomal_bL25_long"/>
</dbReference>
<dbReference type="InterPro" id="IPR029751">
    <property type="entry name" value="Ribosomal_L25_dom"/>
</dbReference>
<dbReference type="InterPro" id="IPR020930">
    <property type="entry name" value="Ribosomal_uL5_bac-type"/>
</dbReference>
<dbReference type="NCBIfam" id="TIGR00731">
    <property type="entry name" value="bL25_bact_ctc"/>
    <property type="match status" value="1"/>
</dbReference>
<dbReference type="NCBIfam" id="NF004128">
    <property type="entry name" value="PRK05618.1-2"/>
    <property type="match status" value="1"/>
</dbReference>
<dbReference type="NCBIfam" id="NF004130">
    <property type="entry name" value="PRK05618.1-5"/>
    <property type="match status" value="1"/>
</dbReference>
<dbReference type="NCBIfam" id="NF004612">
    <property type="entry name" value="PRK05943.1"/>
    <property type="match status" value="1"/>
</dbReference>
<dbReference type="PANTHER" id="PTHR33284">
    <property type="entry name" value="RIBOSOMAL PROTEIN L25/GLN-TRNA SYNTHETASE, ANTI-CODON-BINDING DOMAIN-CONTAINING PROTEIN"/>
    <property type="match status" value="1"/>
</dbReference>
<dbReference type="PANTHER" id="PTHR33284:SF1">
    <property type="entry name" value="RIBOSOMAL PROTEIN L25_GLN-TRNA SYNTHETASE, ANTI-CODON-BINDING DOMAIN-CONTAINING PROTEIN"/>
    <property type="match status" value="1"/>
</dbReference>
<dbReference type="Pfam" id="PF01386">
    <property type="entry name" value="Ribosomal_L25p"/>
    <property type="match status" value="1"/>
</dbReference>
<dbReference type="Pfam" id="PF14693">
    <property type="entry name" value="Ribosomal_TL5_C"/>
    <property type="match status" value="1"/>
</dbReference>
<dbReference type="SUPFAM" id="SSF50715">
    <property type="entry name" value="Ribosomal protein L25-like"/>
    <property type="match status" value="1"/>
</dbReference>